<keyword id="KW-0067">ATP-binding</keyword>
<keyword id="KW-0093">Biotin biosynthesis</keyword>
<keyword id="KW-0963">Cytoplasm</keyword>
<keyword id="KW-0436">Ligase</keyword>
<keyword id="KW-0460">Magnesium</keyword>
<keyword id="KW-0479">Metal-binding</keyword>
<keyword id="KW-0547">Nucleotide-binding</keyword>
<protein>
    <recommendedName>
        <fullName evidence="1">ATP-dependent dethiobiotin synthetase BioD</fullName>
        <ecNumber evidence="1">6.3.3.3</ecNumber>
    </recommendedName>
    <alternativeName>
        <fullName evidence="1">DTB synthetase</fullName>
        <shortName evidence="1">DTBS</shortName>
    </alternativeName>
    <alternativeName>
        <fullName evidence="1">Dethiobiotin synthase</fullName>
    </alternativeName>
</protein>
<name>BIOD_CLOBK</name>
<comment type="function">
    <text evidence="1">Catalyzes a mechanistically unusual reaction, the ATP-dependent insertion of CO2 between the N7 and N8 nitrogen atoms of 7,8-diaminopelargonic acid (DAPA, also called 7,8-diammoniononanoate) to form a ureido ring.</text>
</comment>
<comment type="catalytic activity">
    <reaction evidence="1">
        <text>(7R,8S)-7,8-diammoniononanoate + CO2 + ATP = (4R,5S)-dethiobiotin + ADP + phosphate + 3 H(+)</text>
        <dbReference type="Rhea" id="RHEA:15805"/>
        <dbReference type="ChEBI" id="CHEBI:15378"/>
        <dbReference type="ChEBI" id="CHEBI:16526"/>
        <dbReference type="ChEBI" id="CHEBI:30616"/>
        <dbReference type="ChEBI" id="CHEBI:43474"/>
        <dbReference type="ChEBI" id="CHEBI:149469"/>
        <dbReference type="ChEBI" id="CHEBI:149473"/>
        <dbReference type="ChEBI" id="CHEBI:456216"/>
        <dbReference type="EC" id="6.3.3.3"/>
    </reaction>
</comment>
<comment type="cofactor">
    <cofactor evidence="1">
        <name>Mg(2+)</name>
        <dbReference type="ChEBI" id="CHEBI:18420"/>
    </cofactor>
</comment>
<comment type="pathway">
    <text evidence="1">Cofactor biosynthesis; biotin biosynthesis; biotin from 7,8-diaminononanoate: step 1/2.</text>
</comment>
<comment type="subunit">
    <text evidence="1">Homodimer.</text>
</comment>
<comment type="subcellular location">
    <subcellularLocation>
        <location evidence="1">Cytoplasm</location>
    </subcellularLocation>
</comment>
<comment type="similarity">
    <text evidence="1">Belongs to the dethiobiotin synthetase family.</text>
</comment>
<gene>
    <name evidence="1" type="primary">bioD</name>
    <name type="ordered locus">CLD_2317</name>
</gene>
<proteinExistence type="inferred from homology"/>
<dbReference type="EC" id="6.3.3.3" evidence="1"/>
<dbReference type="EMBL" id="CP000939">
    <property type="protein sequence ID" value="ACA44893.1"/>
    <property type="molecule type" value="Genomic_DNA"/>
</dbReference>
<dbReference type="RefSeq" id="WP_004451629.1">
    <property type="nucleotide sequence ID" value="NC_010516.1"/>
</dbReference>
<dbReference type="SMR" id="B1IHH8"/>
<dbReference type="KEGG" id="cbb:CLD_2317"/>
<dbReference type="HOGENOM" id="CLU_072551_3_0_9"/>
<dbReference type="UniPathway" id="UPA00078">
    <property type="reaction ID" value="UER00161"/>
</dbReference>
<dbReference type="Proteomes" id="UP000008541">
    <property type="component" value="Chromosome"/>
</dbReference>
<dbReference type="GO" id="GO:0005829">
    <property type="term" value="C:cytosol"/>
    <property type="evidence" value="ECO:0007669"/>
    <property type="project" value="TreeGrafter"/>
</dbReference>
<dbReference type="GO" id="GO:0005524">
    <property type="term" value="F:ATP binding"/>
    <property type="evidence" value="ECO:0007669"/>
    <property type="project" value="UniProtKB-UniRule"/>
</dbReference>
<dbReference type="GO" id="GO:0004141">
    <property type="term" value="F:dethiobiotin synthase activity"/>
    <property type="evidence" value="ECO:0007669"/>
    <property type="project" value="UniProtKB-UniRule"/>
</dbReference>
<dbReference type="GO" id="GO:0000287">
    <property type="term" value="F:magnesium ion binding"/>
    <property type="evidence" value="ECO:0007669"/>
    <property type="project" value="UniProtKB-UniRule"/>
</dbReference>
<dbReference type="GO" id="GO:0009102">
    <property type="term" value="P:biotin biosynthetic process"/>
    <property type="evidence" value="ECO:0007669"/>
    <property type="project" value="UniProtKB-UniRule"/>
</dbReference>
<dbReference type="CDD" id="cd03109">
    <property type="entry name" value="DTBS"/>
    <property type="match status" value="1"/>
</dbReference>
<dbReference type="Gene3D" id="3.40.50.300">
    <property type="entry name" value="P-loop containing nucleotide triphosphate hydrolases"/>
    <property type="match status" value="1"/>
</dbReference>
<dbReference type="HAMAP" id="MF_00336">
    <property type="entry name" value="BioD"/>
    <property type="match status" value="1"/>
</dbReference>
<dbReference type="InterPro" id="IPR004472">
    <property type="entry name" value="DTB_synth_BioD"/>
</dbReference>
<dbReference type="InterPro" id="IPR027417">
    <property type="entry name" value="P-loop_NTPase"/>
</dbReference>
<dbReference type="NCBIfam" id="TIGR00347">
    <property type="entry name" value="bioD"/>
    <property type="match status" value="1"/>
</dbReference>
<dbReference type="PANTHER" id="PTHR43210:SF2">
    <property type="entry name" value="ATP-DEPENDENT DETHIOBIOTIN SYNTHETASE BIOD 2"/>
    <property type="match status" value="1"/>
</dbReference>
<dbReference type="PANTHER" id="PTHR43210">
    <property type="entry name" value="DETHIOBIOTIN SYNTHETASE"/>
    <property type="match status" value="1"/>
</dbReference>
<dbReference type="Pfam" id="PF13500">
    <property type="entry name" value="AAA_26"/>
    <property type="match status" value="1"/>
</dbReference>
<dbReference type="PIRSF" id="PIRSF006755">
    <property type="entry name" value="DTB_synth"/>
    <property type="match status" value="1"/>
</dbReference>
<dbReference type="SUPFAM" id="SSF52540">
    <property type="entry name" value="P-loop containing nucleoside triphosphate hydrolases"/>
    <property type="match status" value="1"/>
</dbReference>
<feature type="chain" id="PRO_1000119867" description="ATP-dependent dethiobiotin synthetase BioD">
    <location>
        <begin position="1"/>
        <end position="227"/>
    </location>
</feature>
<feature type="active site" evidence="1">
    <location>
        <position position="38"/>
    </location>
</feature>
<feature type="binding site" evidence="1">
    <location>
        <begin position="13"/>
        <end position="18"/>
    </location>
    <ligand>
        <name>ATP</name>
        <dbReference type="ChEBI" id="CHEBI:30616"/>
    </ligand>
</feature>
<feature type="binding site" evidence="1">
    <location>
        <position position="17"/>
    </location>
    <ligand>
        <name>Mg(2+)</name>
        <dbReference type="ChEBI" id="CHEBI:18420"/>
    </ligand>
</feature>
<feature type="binding site" evidence="1">
    <location>
        <position position="42"/>
    </location>
    <ligand>
        <name>substrate</name>
    </ligand>
</feature>
<feature type="binding site" evidence="1">
    <location>
        <position position="55"/>
    </location>
    <ligand>
        <name>ATP</name>
        <dbReference type="ChEBI" id="CHEBI:30616"/>
    </ligand>
</feature>
<feature type="binding site" evidence="1">
    <location>
        <position position="55"/>
    </location>
    <ligand>
        <name>Mg(2+)</name>
        <dbReference type="ChEBI" id="CHEBI:18420"/>
    </ligand>
</feature>
<feature type="binding site" evidence="1">
    <location>
        <begin position="116"/>
        <end position="119"/>
    </location>
    <ligand>
        <name>ATP</name>
        <dbReference type="ChEBI" id="CHEBI:30616"/>
    </ligand>
</feature>
<feature type="binding site" evidence="1">
    <location>
        <position position="116"/>
    </location>
    <ligand>
        <name>Mg(2+)</name>
        <dbReference type="ChEBI" id="CHEBI:18420"/>
    </ligand>
</feature>
<feature type="binding site" evidence="1">
    <location>
        <begin position="179"/>
        <end position="180"/>
    </location>
    <ligand>
        <name>ATP</name>
        <dbReference type="ChEBI" id="CHEBI:30616"/>
    </ligand>
</feature>
<organism>
    <name type="scientific">Clostridium botulinum (strain Okra / Type B1)</name>
    <dbReference type="NCBI Taxonomy" id="498213"/>
    <lineage>
        <taxon>Bacteria</taxon>
        <taxon>Bacillati</taxon>
        <taxon>Bacillota</taxon>
        <taxon>Clostridia</taxon>
        <taxon>Eubacteriales</taxon>
        <taxon>Clostridiaceae</taxon>
        <taxon>Clostridium</taxon>
    </lineage>
</organism>
<reference key="1">
    <citation type="journal article" date="2007" name="PLoS ONE">
        <title>Analysis of the neurotoxin complex genes in Clostridium botulinum A1-A4 and B1 strains: BoNT/A3, /Ba4 and /B1 clusters are located within plasmids.</title>
        <authorList>
            <person name="Smith T.J."/>
            <person name="Hill K.K."/>
            <person name="Foley B.T."/>
            <person name="Detter J.C."/>
            <person name="Munk A.C."/>
            <person name="Bruce D.C."/>
            <person name="Doggett N.A."/>
            <person name="Smith L.A."/>
            <person name="Marks J.D."/>
            <person name="Xie G."/>
            <person name="Brettin T.S."/>
        </authorList>
    </citation>
    <scope>NUCLEOTIDE SEQUENCE [LARGE SCALE GENOMIC DNA]</scope>
    <source>
        <strain>Okra / Type B1</strain>
    </source>
</reference>
<evidence type="ECO:0000255" key="1">
    <source>
        <dbReference type="HAMAP-Rule" id="MF_00336"/>
    </source>
</evidence>
<accession>B1IHH8</accession>
<sequence>MARGIFITATGTDIGKTYVTALIIKRLRETNINCGYYKAALSGAERRDGKLIAGDANYVYNIANIKGDPNDAVSYIFQQAVSPHLAAKLNNVEISMERIKKDFYSIKNKYDYITVEGSGGIVCPISTGKKKIMLDNIIKIFKLPAIVVADAGLGTINSTILTLQYMKEKNISVKMILLNNYNHEDIIHIENKGYLSDNLLIPVYTCNKNANNLEIPVEKLIEIYEEI</sequence>